<geneLocation type="chloroplast"/>
<organism>
    <name type="scientific">Populus trichocarpa</name>
    <name type="common">Western balsam poplar</name>
    <name type="synonym">Populus balsamifera subsp. trichocarpa</name>
    <dbReference type="NCBI Taxonomy" id="3694"/>
    <lineage>
        <taxon>Eukaryota</taxon>
        <taxon>Viridiplantae</taxon>
        <taxon>Streptophyta</taxon>
        <taxon>Embryophyta</taxon>
        <taxon>Tracheophyta</taxon>
        <taxon>Spermatophyta</taxon>
        <taxon>Magnoliopsida</taxon>
        <taxon>eudicotyledons</taxon>
        <taxon>Gunneridae</taxon>
        <taxon>Pentapetalae</taxon>
        <taxon>rosids</taxon>
        <taxon>fabids</taxon>
        <taxon>Malpighiales</taxon>
        <taxon>Salicaceae</taxon>
        <taxon>Saliceae</taxon>
        <taxon>Populus</taxon>
    </lineage>
</organism>
<evidence type="ECO:0000255" key="1">
    <source>
        <dbReference type="HAMAP-Rule" id="MF_00059"/>
    </source>
</evidence>
<dbReference type="EC" id="2.7.7.6" evidence="1"/>
<dbReference type="EMBL" id="EF489041">
    <property type="protein sequence ID" value="ABO36738.1"/>
    <property type="molecule type" value="Genomic_DNA"/>
</dbReference>
<dbReference type="RefSeq" id="YP_001109534.1">
    <property type="nucleotide sequence ID" value="NC_009143.1"/>
</dbReference>
<dbReference type="SMR" id="A4GYU3"/>
<dbReference type="FunCoup" id="A4GYU3">
    <property type="interactions" value="184"/>
</dbReference>
<dbReference type="STRING" id="3694.A4GYU3"/>
<dbReference type="GeneID" id="4929705"/>
<dbReference type="KEGG" id="pop:4929705"/>
<dbReference type="InParanoid" id="A4GYU3"/>
<dbReference type="OrthoDB" id="812798at2759"/>
<dbReference type="Proteomes" id="UP000006729">
    <property type="component" value="Chloroplast"/>
</dbReference>
<dbReference type="GO" id="GO:0009507">
    <property type="term" value="C:chloroplast"/>
    <property type="evidence" value="ECO:0007669"/>
    <property type="project" value="UniProtKB-SubCell"/>
</dbReference>
<dbReference type="GO" id="GO:0000428">
    <property type="term" value="C:DNA-directed RNA polymerase complex"/>
    <property type="evidence" value="ECO:0007669"/>
    <property type="project" value="UniProtKB-KW"/>
</dbReference>
<dbReference type="GO" id="GO:0005739">
    <property type="term" value="C:mitochondrion"/>
    <property type="evidence" value="ECO:0007669"/>
    <property type="project" value="GOC"/>
</dbReference>
<dbReference type="GO" id="GO:0003677">
    <property type="term" value="F:DNA binding"/>
    <property type="evidence" value="ECO:0007669"/>
    <property type="project" value="UniProtKB-UniRule"/>
</dbReference>
<dbReference type="GO" id="GO:0003899">
    <property type="term" value="F:DNA-directed RNA polymerase activity"/>
    <property type="evidence" value="ECO:0007669"/>
    <property type="project" value="UniProtKB-UniRule"/>
</dbReference>
<dbReference type="GO" id="GO:0046983">
    <property type="term" value="F:protein dimerization activity"/>
    <property type="evidence" value="ECO:0007669"/>
    <property type="project" value="InterPro"/>
</dbReference>
<dbReference type="GO" id="GO:0006351">
    <property type="term" value="P:DNA-templated transcription"/>
    <property type="evidence" value="ECO:0007669"/>
    <property type="project" value="UniProtKB-UniRule"/>
</dbReference>
<dbReference type="CDD" id="cd06928">
    <property type="entry name" value="RNAP_alpha_NTD"/>
    <property type="match status" value="1"/>
</dbReference>
<dbReference type="FunFam" id="2.170.120.12:FF:000001">
    <property type="entry name" value="DNA-directed RNA polymerase subunit alpha"/>
    <property type="match status" value="1"/>
</dbReference>
<dbReference type="FunFam" id="3.30.1360.10:FF:000039">
    <property type="entry name" value="DNA-directed RNA polymerase subunit alpha"/>
    <property type="match status" value="1"/>
</dbReference>
<dbReference type="Gene3D" id="1.10.150.20">
    <property type="entry name" value="5' to 3' exonuclease, C-terminal subdomain"/>
    <property type="match status" value="1"/>
</dbReference>
<dbReference type="Gene3D" id="2.170.120.12">
    <property type="entry name" value="DNA-directed RNA polymerase, insert domain"/>
    <property type="match status" value="1"/>
</dbReference>
<dbReference type="Gene3D" id="3.30.1360.10">
    <property type="entry name" value="RNA polymerase, RBP11-like subunit"/>
    <property type="match status" value="1"/>
</dbReference>
<dbReference type="HAMAP" id="MF_00059">
    <property type="entry name" value="RNApol_bact_RpoA"/>
    <property type="match status" value="1"/>
</dbReference>
<dbReference type="InterPro" id="IPR011262">
    <property type="entry name" value="DNA-dir_RNA_pol_insert"/>
</dbReference>
<dbReference type="InterPro" id="IPR011263">
    <property type="entry name" value="DNA-dir_RNA_pol_RpoA/D/Rpb3"/>
</dbReference>
<dbReference type="InterPro" id="IPR011773">
    <property type="entry name" value="DNA-dir_RpoA"/>
</dbReference>
<dbReference type="InterPro" id="IPR036603">
    <property type="entry name" value="RBP11-like"/>
</dbReference>
<dbReference type="InterPro" id="IPR011260">
    <property type="entry name" value="RNAP_asu_C"/>
</dbReference>
<dbReference type="InterPro" id="IPR036643">
    <property type="entry name" value="RNApol_insert_sf"/>
</dbReference>
<dbReference type="NCBIfam" id="TIGR02027">
    <property type="entry name" value="rpoA"/>
    <property type="match status" value="1"/>
</dbReference>
<dbReference type="Pfam" id="PF01000">
    <property type="entry name" value="RNA_pol_A_bac"/>
    <property type="match status" value="1"/>
</dbReference>
<dbReference type="Pfam" id="PF03118">
    <property type="entry name" value="RNA_pol_A_CTD"/>
    <property type="match status" value="1"/>
</dbReference>
<dbReference type="Pfam" id="PF01193">
    <property type="entry name" value="RNA_pol_L"/>
    <property type="match status" value="1"/>
</dbReference>
<dbReference type="SMART" id="SM00662">
    <property type="entry name" value="RPOLD"/>
    <property type="match status" value="1"/>
</dbReference>
<dbReference type="SUPFAM" id="SSF47789">
    <property type="entry name" value="C-terminal domain of RNA polymerase alpha subunit"/>
    <property type="match status" value="1"/>
</dbReference>
<dbReference type="SUPFAM" id="SSF56553">
    <property type="entry name" value="Insert subdomain of RNA polymerase alpha subunit"/>
    <property type="match status" value="1"/>
</dbReference>
<dbReference type="SUPFAM" id="SSF55257">
    <property type="entry name" value="RBP11-like subunits of RNA polymerase"/>
    <property type="match status" value="1"/>
</dbReference>
<comment type="function">
    <text evidence="1">DNA-dependent RNA polymerase catalyzes the transcription of DNA into RNA using the four ribonucleoside triphosphates as substrates.</text>
</comment>
<comment type="catalytic activity">
    <reaction evidence="1">
        <text>RNA(n) + a ribonucleoside 5'-triphosphate = RNA(n+1) + diphosphate</text>
        <dbReference type="Rhea" id="RHEA:21248"/>
        <dbReference type="Rhea" id="RHEA-COMP:14527"/>
        <dbReference type="Rhea" id="RHEA-COMP:17342"/>
        <dbReference type="ChEBI" id="CHEBI:33019"/>
        <dbReference type="ChEBI" id="CHEBI:61557"/>
        <dbReference type="ChEBI" id="CHEBI:140395"/>
        <dbReference type="EC" id="2.7.7.6"/>
    </reaction>
</comment>
<comment type="subunit">
    <text evidence="1">In plastids the minimal PEP RNA polymerase catalytic core is composed of four subunits: alpha, beta, beta', and beta''. When a (nuclear-encoded) sigma factor is associated with the core the holoenzyme is formed, which can initiate transcription.</text>
</comment>
<comment type="subcellular location">
    <subcellularLocation>
        <location>Plastid</location>
        <location>Chloroplast</location>
    </subcellularLocation>
</comment>
<comment type="domain">
    <text evidence="1">The N-terminal domain is essential for RNAP assembly and basal transcription, whereas the C-terminal domain is involved in interaction with transcriptional regulators and with upstream promoter elements.</text>
</comment>
<comment type="similarity">
    <text evidence="1">Belongs to the RNA polymerase alpha chain family.</text>
</comment>
<feature type="chain" id="PRO_0000296906" description="DNA-directed RNA polymerase subunit alpha">
    <location>
        <begin position="1"/>
        <end position="339"/>
    </location>
</feature>
<feature type="region of interest" description="Alpha N-terminal domain (alpha-NTD)" evidence="1">
    <location>
        <begin position="1"/>
        <end position="233"/>
    </location>
</feature>
<feature type="region of interest" description="Alpha C-terminal domain (alpha-CTD)" evidence="1">
    <location>
        <begin position="267"/>
        <end position="339"/>
    </location>
</feature>
<reference key="1">
    <citation type="journal article" date="2006" name="Science">
        <title>The genome of black cottonwood, Populus trichocarpa (Torr. &amp; Gray).</title>
        <authorList>
            <person name="Tuskan G.A."/>
            <person name="Difazio S."/>
            <person name="Jansson S."/>
            <person name="Bohlmann J."/>
            <person name="Grigoriev I."/>
            <person name="Hellsten U."/>
            <person name="Putnam N."/>
            <person name="Ralph S."/>
            <person name="Rombauts S."/>
            <person name="Salamov A."/>
            <person name="Schein J."/>
            <person name="Sterck L."/>
            <person name="Aerts A."/>
            <person name="Bhalerao R.R."/>
            <person name="Bhalerao R.P."/>
            <person name="Blaudez D."/>
            <person name="Boerjan W."/>
            <person name="Brun A."/>
            <person name="Brunner A."/>
            <person name="Busov V."/>
            <person name="Campbell M."/>
            <person name="Carlson J."/>
            <person name="Chalot M."/>
            <person name="Chapman J."/>
            <person name="Chen G.-L."/>
            <person name="Cooper D."/>
            <person name="Coutinho P.M."/>
            <person name="Couturier J."/>
            <person name="Covert S."/>
            <person name="Cronk Q."/>
            <person name="Cunningham R."/>
            <person name="Davis J."/>
            <person name="Degroeve S."/>
            <person name="Dejardin A."/>
            <person name="dePamphilis C.W."/>
            <person name="Detter J."/>
            <person name="Dirks B."/>
            <person name="Dubchak I."/>
            <person name="Duplessis S."/>
            <person name="Ehlting J."/>
            <person name="Ellis B."/>
            <person name="Gendler K."/>
            <person name="Goodstein D."/>
            <person name="Gribskov M."/>
            <person name="Grimwood J."/>
            <person name="Groover A."/>
            <person name="Gunter L."/>
            <person name="Hamberger B."/>
            <person name="Heinze B."/>
            <person name="Helariutta Y."/>
            <person name="Henrissat B."/>
            <person name="Holligan D."/>
            <person name="Holt R."/>
            <person name="Huang W."/>
            <person name="Islam-Faridi N."/>
            <person name="Jones S."/>
            <person name="Jones-Rhoades M."/>
            <person name="Jorgensen R."/>
            <person name="Joshi C."/>
            <person name="Kangasjaervi J."/>
            <person name="Karlsson J."/>
            <person name="Kelleher C."/>
            <person name="Kirkpatrick R."/>
            <person name="Kirst M."/>
            <person name="Kohler A."/>
            <person name="Kalluri U."/>
            <person name="Larimer F."/>
            <person name="Leebens-Mack J."/>
            <person name="Leple J.-C."/>
            <person name="Locascio P."/>
            <person name="Lou Y."/>
            <person name="Lucas S."/>
            <person name="Martin F."/>
            <person name="Montanini B."/>
            <person name="Napoli C."/>
            <person name="Nelson D.R."/>
            <person name="Nelson C."/>
            <person name="Nieminen K."/>
            <person name="Nilsson O."/>
            <person name="Pereda V."/>
            <person name="Peter G."/>
            <person name="Philippe R."/>
            <person name="Pilate G."/>
            <person name="Poliakov A."/>
            <person name="Razumovskaya J."/>
            <person name="Richardson P."/>
            <person name="Rinaldi C."/>
            <person name="Ritland K."/>
            <person name="Rouze P."/>
            <person name="Ryaboy D."/>
            <person name="Schmutz J."/>
            <person name="Schrader J."/>
            <person name="Segerman B."/>
            <person name="Shin H."/>
            <person name="Siddiqui A."/>
            <person name="Sterky F."/>
            <person name="Terry A."/>
            <person name="Tsai C.-J."/>
            <person name="Uberbacher E."/>
            <person name="Unneberg P."/>
            <person name="Vahala J."/>
            <person name="Wall K."/>
            <person name="Wessler S."/>
            <person name="Yang G."/>
            <person name="Yin T."/>
            <person name="Douglas C."/>
            <person name="Marra M."/>
            <person name="Sandberg G."/>
            <person name="Van de Peer Y."/>
            <person name="Rokhsar D.S."/>
        </authorList>
    </citation>
    <scope>NUCLEOTIDE SEQUENCE [LARGE SCALE GENOMIC DNA]</scope>
    <source>
        <strain>cv. Nisqually</strain>
    </source>
</reference>
<gene>
    <name evidence="1" type="primary">rpoA</name>
    <name type="ordered locus">Poptr_cp055</name>
</gene>
<proteinExistence type="inferred from homology"/>
<protein>
    <recommendedName>
        <fullName evidence="1">DNA-directed RNA polymerase subunit alpha</fullName>
        <shortName evidence="1">PEP</shortName>
        <ecNumber evidence="1">2.7.7.6</ecNumber>
    </recommendedName>
    <alternativeName>
        <fullName evidence="1">Plastid-encoded RNA polymerase subunit alpha</fullName>
        <shortName evidence="1">RNA polymerase subunit alpha</shortName>
    </alternativeName>
</protein>
<accession>A4GYU3</accession>
<keyword id="KW-0150">Chloroplast</keyword>
<keyword id="KW-0240">DNA-directed RNA polymerase</keyword>
<keyword id="KW-0548">Nucleotidyltransferase</keyword>
<keyword id="KW-0934">Plastid</keyword>
<keyword id="KW-1185">Reference proteome</keyword>
<keyword id="KW-0804">Transcription</keyword>
<keyword id="KW-0808">Transferase</keyword>
<name>RPOA_POPTR</name>
<sequence length="339" mass="39092">MVREKVRISTRTLQWKCVESRADSKRLYYGRFILSPLMKGQADTIGIAMRRALLGEIEGTCITRAKSKKIPHEFSTITGIQESIHEILMNLKEIVLRSNLYGTHDASICVKGPGCVTAQDIILPPSVEIIDNTQHIASLREPIDLHIGLEIERNRGYCMKPPKNFQDGSYSIDAVFMPVRNANHSVHSYGNGNEKQEILFLEIWTNGSLTPKEALHEASRNLIDLFIPFLHAEEENFHLEKNQHKITLPLFAFHDRLAKLRKNQKEIALKSIFIDQLELAPKIYNCLKRSNIHTLWDLLKNSQEDLMKIEHFRIEDVKHIFGILKIEKHFTINLPKNKF</sequence>